<name>FKBP4_CHATD</name>
<accession>G0SC91</accession>
<feature type="chain" id="PRO_0000435811" description="FK506-binding protein 4">
    <location>
        <begin position="1"/>
        <end position="483"/>
    </location>
</feature>
<feature type="domain" description="PPIase FKBP-type" evidence="2">
    <location>
        <begin position="397"/>
        <end position="483"/>
    </location>
</feature>
<feature type="region of interest" description="Disordered" evidence="3">
    <location>
        <begin position="41"/>
        <end position="171"/>
    </location>
</feature>
<feature type="region of interest" description="Disordered" evidence="3">
    <location>
        <begin position="208"/>
        <end position="371"/>
    </location>
</feature>
<feature type="compositionally biased region" description="Acidic residues" evidence="3">
    <location>
        <begin position="68"/>
        <end position="93"/>
    </location>
</feature>
<feature type="compositionally biased region" description="Basic and acidic residues" evidence="3">
    <location>
        <begin position="108"/>
        <end position="121"/>
    </location>
</feature>
<feature type="compositionally biased region" description="Basic and acidic residues" evidence="3">
    <location>
        <begin position="130"/>
        <end position="150"/>
    </location>
</feature>
<feature type="compositionally biased region" description="Acidic residues" evidence="3">
    <location>
        <begin position="151"/>
        <end position="167"/>
    </location>
</feature>
<feature type="compositionally biased region" description="Acidic residues" evidence="3">
    <location>
        <begin position="216"/>
        <end position="233"/>
    </location>
</feature>
<feature type="compositionally biased region" description="Acidic residues" evidence="3">
    <location>
        <begin position="241"/>
        <end position="256"/>
    </location>
</feature>
<feature type="compositionally biased region" description="Basic and acidic residues" evidence="3">
    <location>
        <begin position="298"/>
        <end position="309"/>
    </location>
</feature>
<feature type="compositionally biased region" description="Basic and acidic residues" evidence="3">
    <location>
        <begin position="323"/>
        <end position="344"/>
    </location>
</feature>
<feature type="compositionally biased region" description="Basic and acidic residues" evidence="3">
    <location>
        <begin position="351"/>
        <end position="370"/>
    </location>
</feature>
<protein>
    <recommendedName>
        <fullName>FK506-binding protein 4</fullName>
        <ecNumber evidence="1">5.2.1.8</ecNumber>
    </recommendedName>
    <alternativeName>
        <fullName evidence="1">Histone proline isomerase</fullName>
    </alternativeName>
    <alternativeName>
        <fullName>Peptidyl-prolyl cis-trans isomerase</fullName>
        <shortName>PPIase</shortName>
    </alternativeName>
    <alternativeName>
        <fullName>Rotamase</fullName>
    </alternativeName>
</protein>
<proteinExistence type="inferred from homology"/>
<dbReference type="EC" id="5.2.1.8" evidence="1"/>
<dbReference type="EMBL" id="GL988045">
    <property type="protein sequence ID" value="EGS19017.1"/>
    <property type="status" value="ALT_SEQ"/>
    <property type="molecule type" value="Genomic_DNA"/>
</dbReference>
<dbReference type="RefSeq" id="XP_006695962.1">
    <property type="nucleotide sequence ID" value="XM_006695899.1"/>
</dbReference>
<dbReference type="SMR" id="G0SC91"/>
<dbReference type="STRING" id="759272.G0SC91"/>
<dbReference type="GeneID" id="18259675"/>
<dbReference type="KEGG" id="cthr:CTHT_0056370"/>
<dbReference type="eggNOG" id="KOG0552">
    <property type="taxonomic scope" value="Eukaryota"/>
</dbReference>
<dbReference type="eggNOG" id="KOG0605">
    <property type="taxonomic scope" value="Eukaryota"/>
</dbReference>
<dbReference type="HOGENOM" id="CLU_005146_1_0_1"/>
<dbReference type="OrthoDB" id="77911at2759"/>
<dbReference type="Proteomes" id="UP000008066">
    <property type="component" value="Unassembled WGS sequence"/>
</dbReference>
<dbReference type="GO" id="GO:0000785">
    <property type="term" value="C:chromatin"/>
    <property type="evidence" value="ECO:0007669"/>
    <property type="project" value="TreeGrafter"/>
</dbReference>
<dbReference type="GO" id="GO:0005730">
    <property type="term" value="C:nucleolus"/>
    <property type="evidence" value="ECO:0007669"/>
    <property type="project" value="TreeGrafter"/>
</dbReference>
<dbReference type="GO" id="GO:0003755">
    <property type="term" value="F:peptidyl-prolyl cis-trans isomerase activity"/>
    <property type="evidence" value="ECO:0007669"/>
    <property type="project" value="UniProtKB-KW"/>
</dbReference>
<dbReference type="FunFam" id="3.10.50.40:FF:000006">
    <property type="entry name" value="Peptidyl-prolyl cis-trans isomerase"/>
    <property type="match status" value="1"/>
</dbReference>
<dbReference type="Gene3D" id="3.10.50.40">
    <property type="match status" value="1"/>
</dbReference>
<dbReference type="Gene3D" id="2.60.120.340">
    <property type="entry name" value="Nucleoplasmin core domain"/>
    <property type="match status" value="1"/>
</dbReference>
<dbReference type="InterPro" id="IPR041232">
    <property type="entry name" value="NPL"/>
</dbReference>
<dbReference type="InterPro" id="IPR046357">
    <property type="entry name" value="PPIase_dom_sf"/>
</dbReference>
<dbReference type="InterPro" id="IPR001179">
    <property type="entry name" value="PPIase_FKBP_dom"/>
</dbReference>
<dbReference type="InterPro" id="IPR023566">
    <property type="entry name" value="PPIase_Fpr3/Fpr4-like"/>
</dbReference>
<dbReference type="PANTHER" id="PTHR43811:SF19">
    <property type="entry name" value="39 KDA FK506-BINDING NUCLEAR PROTEIN"/>
    <property type="match status" value="1"/>
</dbReference>
<dbReference type="PANTHER" id="PTHR43811">
    <property type="entry name" value="FKBP-TYPE PEPTIDYL-PROLYL CIS-TRANS ISOMERASE FKPA"/>
    <property type="match status" value="1"/>
</dbReference>
<dbReference type="Pfam" id="PF00254">
    <property type="entry name" value="FKBP_C"/>
    <property type="match status" value="1"/>
</dbReference>
<dbReference type="Pfam" id="PF17800">
    <property type="entry name" value="NPL"/>
    <property type="match status" value="1"/>
</dbReference>
<dbReference type="PIRSF" id="PIRSF001473">
    <property type="entry name" value="FK506-bp_FPR3"/>
    <property type="match status" value="1"/>
</dbReference>
<dbReference type="SUPFAM" id="SSF54534">
    <property type="entry name" value="FKBP-like"/>
    <property type="match status" value="1"/>
</dbReference>
<dbReference type="PROSITE" id="PS50059">
    <property type="entry name" value="FKBP_PPIASE"/>
    <property type="match status" value="1"/>
</dbReference>
<keyword id="KW-0143">Chaperone</keyword>
<keyword id="KW-0413">Isomerase</keyword>
<keyword id="KW-0539">Nucleus</keyword>
<keyword id="KW-1185">Reference proteome</keyword>
<keyword id="KW-0697">Rotamase</keyword>
<reference key="1">
    <citation type="journal article" date="2011" name="Cell">
        <title>Insight into structure and assembly of the nuclear pore complex by utilizing the genome of a eukaryotic thermophile.</title>
        <authorList>
            <person name="Amlacher S."/>
            <person name="Sarges P."/>
            <person name="Flemming D."/>
            <person name="van Noort V."/>
            <person name="Kunze R."/>
            <person name="Devos D.P."/>
            <person name="Arumugam M."/>
            <person name="Bork P."/>
            <person name="Hurt E."/>
        </authorList>
    </citation>
    <scope>NUCLEOTIDE SEQUENCE [LARGE SCALE GENOMIC DNA]</scope>
    <source>
        <strain>DSM 1495 / CBS 144.50 / IMI 039719</strain>
    </source>
</reference>
<gene>
    <name type="primary">FPR4</name>
    <name type="ORF">CTHT_0056370</name>
</gene>
<sequence length="483" mass="53290">MSSLLPVAVYGLEVPPGDILVPAQFEFPATIRITMAAIDPTAEPETDGQGNVPTVPRSTLKLIKTTAEEDDDEYLDIDGEDSEDDEESDDEEVNGGPSDPAKSKKARREAAIKKLLEATKEESDEEMEDADAKPNGKGKKDSKGKAKASESDDEKSDEDDEEGEPNFEEFVVCTLDTERTYQQPIDITITEGEKVFFVVKGTHKVYLTGNYVLPEGQDEEDDEDEEDYSDEEYDLPHGIELESDSDYESDELDEIDGTPRIKEIDTDEEEEEAPKLVDTSKKGNKKRPAEEAENLDDLVAKDKKQAEKQKKLKNNKGEAVPAENKDVKKEGKSDKKVQFAKDLEQGPSGPAKDKLEKKEEKKDDKADLKKPSLGVKVVQGVTIDDRKLGTGRTVKSGDRVSLRYIGKLTNGKVFDANKKGAPFTVRVGKGEVIKGWEIGLIGMQVGGERRLTIPPHLAYGSRAMPGIPANSTLVFDIKLLEIK</sequence>
<evidence type="ECO:0000250" key="1">
    <source>
        <dbReference type="UniProtKB" id="Q06205"/>
    </source>
</evidence>
<evidence type="ECO:0000255" key="2">
    <source>
        <dbReference type="PROSITE-ProRule" id="PRU00277"/>
    </source>
</evidence>
<evidence type="ECO:0000256" key="3">
    <source>
        <dbReference type="SAM" id="MobiDB-lite"/>
    </source>
</evidence>
<evidence type="ECO:0000305" key="4"/>
<comment type="function">
    <text evidence="1">PPIase that acts as a histone chaperone. Histone proline isomerase that increases the rate of cis-trans isomerization at prolines on the histone H3 N-terminal tail. Proline isomerization influences H3 methylation thereby regulating gene expression.</text>
</comment>
<comment type="catalytic activity">
    <reaction evidence="1">
        <text>[protein]-peptidylproline (omega=180) = [protein]-peptidylproline (omega=0)</text>
        <dbReference type="Rhea" id="RHEA:16237"/>
        <dbReference type="Rhea" id="RHEA-COMP:10747"/>
        <dbReference type="Rhea" id="RHEA-COMP:10748"/>
        <dbReference type="ChEBI" id="CHEBI:83833"/>
        <dbReference type="ChEBI" id="CHEBI:83834"/>
        <dbReference type="EC" id="5.2.1.8"/>
    </reaction>
</comment>
<comment type="subunit">
    <text evidence="1">Binds to histones H3 and H4.</text>
</comment>
<comment type="subcellular location">
    <subcellularLocation>
        <location evidence="1">Nucleus</location>
    </subcellularLocation>
</comment>
<comment type="similarity">
    <text evidence="4">Belongs to the FKBP-type PPIase family. FKBP3/4 subfamily.</text>
</comment>
<comment type="sequence caution" evidence="4">
    <conflict type="erroneous gene model prediction">
        <sequence resource="EMBL-CDS" id="EGS19017"/>
    </conflict>
</comment>
<organism>
    <name type="scientific">Chaetomium thermophilum (strain DSM 1495 / CBS 144.50 / IMI 039719)</name>
    <name type="common">Thermochaetoides thermophila</name>
    <dbReference type="NCBI Taxonomy" id="759272"/>
    <lineage>
        <taxon>Eukaryota</taxon>
        <taxon>Fungi</taxon>
        <taxon>Dikarya</taxon>
        <taxon>Ascomycota</taxon>
        <taxon>Pezizomycotina</taxon>
        <taxon>Sordariomycetes</taxon>
        <taxon>Sordariomycetidae</taxon>
        <taxon>Sordariales</taxon>
        <taxon>Chaetomiaceae</taxon>
        <taxon>Thermochaetoides</taxon>
    </lineage>
</organism>